<sequence length="91" mass="10313">MARICLHAYVGGRVQGVGFRQATREEADRLELDGWVRNLDDGRVEVVWEGEEDRAKALERWLGRGPRHAEVSAVEVEQMPLQGIAGFVVRR</sequence>
<name>ACYP_PSEAE</name>
<feature type="chain" id="PRO_0000326771" description="Acylphosphatase">
    <location>
        <begin position="1"/>
        <end position="91"/>
    </location>
</feature>
<feature type="domain" description="Acylphosphatase-like" evidence="1">
    <location>
        <begin position="5"/>
        <end position="91"/>
    </location>
</feature>
<feature type="active site" evidence="1">
    <location>
        <position position="20"/>
    </location>
</feature>
<feature type="active site" evidence="1">
    <location>
        <position position="38"/>
    </location>
</feature>
<comment type="catalytic activity">
    <reaction>
        <text>an acyl phosphate + H2O = a carboxylate + phosphate + H(+)</text>
        <dbReference type="Rhea" id="RHEA:14965"/>
        <dbReference type="ChEBI" id="CHEBI:15377"/>
        <dbReference type="ChEBI" id="CHEBI:15378"/>
        <dbReference type="ChEBI" id="CHEBI:29067"/>
        <dbReference type="ChEBI" id="CHEBI:43474"/>
        <dbReference type="ChEBI" id="CHEBI:59918"/>
        <dbReference type="EC" id="3.6.1.7"/>
    </reaction>
</comment>
<comment type="similarity">
    <text evidence="2">Belongs to the acylphosphatase family.</text>
</comment>
<protein>
    <recommendedName>
        <fullName>Acylphosphatase</fullName>
        <ecNumber>3.6.1.7</ecNumber>
    </recommendedName>
    <alternativeName>
        <fullName>Acylphosphate phosphohydrolase</fullName>
    </alternativeName>
</protein>
<organism>
    <name type="scientific">Pseudomonas aeruginosa (strain ATCC 15692 / DSM 22644 / CIP 104116 / JCM 14847 / LMG 12228 / 1C / PRS 101 / PAO1)</name>
    <dbReference type="NCBI Taxonomy" id="208964"/>
    <lineage>
        <taxon>Bacteria</taxon>
        <taxon>Pseudomonadati</taxon>
        <taxon>Pseudomonadota</taxon>
        <taxon>Gammaproteobacteria</taxon>
        <taxon>Pseudomonadales</taxon>
        <taxon>Pseudomonadaceae</taxon>
        <taxon>Pseudomonas</taxon>
    </lineage>
</organism>
<dbReference type="EC" id="3.6.1.7"/>
<dbReference type="EMBL" id="AE004091">
    <property type="protein sequence ID" value="AAG04343.1"/>
    <property type="molecule type" value="Genomic_DNA"/>
</dbReference>
<dbReference type="PIR" id="A83527">
    <property type="entry name" value="A83527"/>
</dbReference>
<dbReference type="RefSeq" id="NP_249645.1">
    <property type="nucleotide sequence ID" value="NC_002516.2"/>
</dbReference>
<dbReference type="RefSeq" id="WP_003102385.1">
    <property type="nucleotide sequence ID" value="NZ_QZGE01000007.1"/>
</dbReference>
<dbReference type="SMR" id="Q9I504"/>
<dbReference type="FunCoup" id="Q9I504">
    <property type="interactions" value="409"/>
</dbReference>
<dbReference type="STRING" id="208964.PA0954"/>
<dbReference type="PaxDb" id="208964-PA0954"/>
<dbReference type="DNASU" id="882022"/>
<dbReference type="GeneID" id="882022"/>
<dbReference type="KEGG" id="pae:PA0954"/>
<dbReference type="PATRIC" id="fig|208964.12.peg.992"/>
<dbReference type="PseudoCAP" id="PA0954"/>
<dbReference type="HOGENOM" id="CLU_141932_3_2_6"/>
<dbReference type="InParanoid" id="Q9I504"/>
<dbReference type="OrthoDB" id="5295388at2"/>
<dbReference type="PhylomeDB" id="Q9I504"/>
<dbReference type="BioCyc" id="PAER208964:G1FZ6-975-MONOMER"/>
<dbReference type="Proteomes" id="UP000002438">
    <property type="component" value="Chromosome"/>
</dbReference>
<dbReference type="GO" id="GO:0003998">
    <property type="term" value="F:acylphosphatase activity"/>
    <property type="evidence" value="ECO:0000318"/>
    <property type="project" value="GO_Central"/>
</dbReference>
<dbReference type="Gene3D" id="3.30.70.100">
    <property type="match status" value="1"/>
</dbReference>
<dbReference type="InterPro" id="IPR020456">
    <property type="entry name" value="Acylphosphatase"/>
</dbReference>
<dbReference type="InterPro" id="IPR001792">
    <property type="entry name" value="Acylphosphatase-like_dom"/>
</dbReference>
<dbReference type="InterPro" id="IPR036046">
    <property type="entry name" value="Acylphosphatase-like_dom_sf"/>
</dbReference>
<dbReference type="InterPro" id="IPR017968">
    <property type="entry name" value="Acylphosphatase_CS"/>
</dbReference>
<dbReference type="NCBIfam" id="NF011014">
    <property type="entry name" value="PRK14442.1"/>
    <property type="match status" value="1"/>
</dbReference>
<dbReference type="PANTHER" id="PTHR47268">
    <property type="entry name" value="ACYLPHOSPHATASE"/>
    <property type="match status" value="1"/>
</dbReference>
<dbReference type="PANTHER" id="PTHR47268:SF4">
    <property type="entry name" value="ACYLPHOSPHATASE"/>
    <property type="match status" value="1"/>
</dbReference>
<dbReference type="Pfam" id="PF00708">
    <property type="entry name" value="Acylphosphatase"/>
    <property type="match status" value="1"/>
</dbReference>
<dbReference type="SUPFAM" id="SSF54975">
    <property type="entry name" value="Acylphosphatase/BLUF domain-like"/>
    <property type="match status" value="1"/>
</dbReference>
<dbReference type="PROSITE" id="PS00150">
    <property type="entry name" value="ACYLPHOSPHATASE_1"/>
    <property type="match status" value="1"/>
</dbReference>
<dbReference type="PROSITE" id="PS00151">
    <property type="entry name" value="ACYLPHOSPHATASE_2"/>
    <property type="match status" value="1"/>
</dbReference>
<dbReference type="PROSITE" id="PS51160">
    <property type="entry name" value="ACYLPHOSPHATASE_3"/>
    <property type="match status" value="1"/>
</dbReference>
<reference key="1">
    <citation type="journal article" date="2000" name="Nature">
        <title>Complete genome sequence of Pseudomonas aeruginosa PAO1, an opportunistic pathogen.</title>
        <authorList>
            <person name="Stover C.K."/>
            <person name="Pham X.-Q.T."/>
            <person name="Erwin A.L."/>
            <person name="Mizoguchi S.D."/>
            <person name="Warrener P."/>
            <person name="Hickey M.J."/>
            <person name="Brinkman F.S.L."/>
            <person name="Hufnagle W.O."/>
            <person name="Kowalik D.J."/>
            <person name="Lagrou M."/>
            <person name="Garber R.L."/>
            <person name="Goltry L."/>
            <person name="Tolentino E."/>
            <person name="Westbrock-Wadman S."/>
            <person name="Yuan Y."/>
            <person name="Brody L.L."/>
            <person name="Coulter S.N."/>
            <person name="Folger K.R."/>
            <person name="Kas A."/>
            <person name="Larbig K."/>
            <person name="Lim R.M."/>
            <person name="Smith K.A."/>
            <person name="Spencer D.H."/>
            <person name="Wong G.K.-S."/>
            <person name="Wu Z."/>
            <person name="Paulsen I.T."/>
            <person name="Reizer J."/>
            <person name="Saier M.H. Jr."/>
            <person name="Hancock R.E.W."/>
            <person name="Lory S."/>
            <person name="Olson M.V."/>
        </authorList>
    </citation>
    <scope>NUCLEOTIDE SEQUENCE [LARGE SCALE GENOMIC DNA]</scope>
    <source>
        <strain>ATCC 15692 / DSM 22644 / CIP 104116 / JCM 14847 / LMG 12228 / 1C / PRS 101 / PAO1</strain>
    </source>
</reference>
<keyword id="KW-0378">Hydrolase</keyword>
<keyword id="KW-1185">Reference proteome</keyword>
<proteinExistence type="inferred from homology"/>
<gene>
    <name type="primary">acyP</name>
    <name type="ordered locus">PA0954</name>
</gene>
<evidence type="ECO:0000255" key="1">
    <source>
        <dbReference type="PROSITE-ProRule" id="PRU00520"/>
    </source>
</evidence>
<evidence type="ECO:0000305" key="2"/>
<accession>Q9I504</accession>